<sequence>MSDGGIEIDFQAFYDRFTKLGKAYSGFEGSPNSLLFVLGSTNEENPYQKTTILHNWLLGYEFPATLIAFFKDKGVIITSSAKAKHLLPAVTKFEGSDYKLEIWQRNNKDANHNKKLFEDLIKLLSENGNTVGVPTKDSYQGKLILEWKPLWEEAKKTHSLNVIDCSAGLSSTWKGKDDKEKAYLSVSSKGSDKFMDLMSNEIVNAVDEELKISNSKLSDKIENKIDDSKFLKKLSSDLNPLCPTDEKFDVNFLDWAYSPIVQSGSKFDLKVSARSNNDSLFGKGSILASCGIRYKNYCSNITRTFLIDPTDEMTDNYDFLLILQEKIIDDLLKVEADPTSIYEKTLEFIKEKKPELLSHFTKNVGSLMGLEFRDSAGMINAKPTAHKISENCCYNISLGFGNLKDSKTGQVYAVQLADTVQLSSDGKPSTLTKYTKARSQISFYFNNEEENKAATVKSEKSKPPALPKPDGTSKILRSKLRGESRADDEEKEQIRKENQRKLHERLQKEGLLRYSDADAVDGDEKPKHFFKKYESYVRETQIPSNVRDLKIHVDWKSQTIILPIYGRPVPFHINSYKNGSKNEEGEYTYLRLNFHSPGAGGVGKKTEELPYEENPENQFVRSLTLRSKDGARMSDVFKQITDLKKESTKREQERKALADVVVQAKLVENKTGRTKRLDQIFVRPSPDTKRVPGTVFIHENGIRYQSPLRTDSRIDILFSNIKNLFFQSSKGELIVIIHVHLKNPILMGKKKIQDIQFYREASDMAVDETGNSRRNNMKFRRYGDEDELEQEQEERRKRAALDKEFRYFAEAIAEASDGLLDVDSPFRDLGFQGVPSRSAVFCMPTRDCLIQLVEPPFLVINLNEVEICILERVQFGLKNFDMVFVYKDLTKPVSHINTVPIEQLEFIKTWLTDVDIPYTVSTINLNWSTIMKSLQDDPHQFFLDGGWSFLATGSDDERSDESEEEISEYEASDEDPSDEEVYSEEEEDYSDDEKFSDEGSDDFADGSEDDEGDDWDDLEKKAAKADRNSNYKE</sequence>
<evidence type="ECO:0000250" key="1"/>
<evidence type="ECO:0000255" key="2"/>
<evidence type="ECO:0000256" key="3">
    <source>
        <dbReference type="SAM" id="MobiDB-lite"/>
    </source>
</evidence>
<evidence type="ECO:0000305" key="4"/>
<comment type="function">
    <text evidence="1">Component of the FACT complex, a general chromatin factor that acts to reorganize nucleosomes. The FACT complex is involved in multiple processes that require DNA as a template such as mRNA elongation, DNA replication and DNA repair. During transcription elongation the FACT complex acts as a histone chaperone that both destabilizes and restores nucleosomal structure. It facilitates the passage of RNA polymerase II and transcription by promoting the dissociation of one histone H2A-H2B dimer from the nucleosome, then subsequently promotes the reestablishment of the nucleosome following the passage of RNA polymerase II (By similarity).</text>
</comment>
<comment type="subunit">
    <text evidence="1">Forms a stable heterodimer with POB3. The SPT16-POB3 dimer weakly associates with multiple molecules of NHP6 to form the FACT complex (By similarity).</text>
</comment>
<comment type="subcellular location">
    <subcellularLocation>
        <location evidence="1">Nucleus</location>
    </subcellularLocation>
    <subcellularLocation>
        <location evidence="1">Chromosome</location>
    </subcellularLocation>
</comment>
<comment type="similarity">
    <text evidence="4">Belongs to the peptidase M24 family. SPT16 subfamily.</text>
</comment>
<comment type="caution">
    <text evidence="4">Although related to the peptidase M24 family, this protein lacks conserved active site residues suggesting that it may lack peptidase activity.</text>
</comment>
<feature type="chain" id="PRO_0000089447" description="FACT complex subunit SPT16">
    <location>
        <begin position="1"/>
        <end position="1033"/>
    </location>
</feature>
<feature type="region of interest" description="Disordered" evidence="3">
    <location>
        <begin position="454"/>
        <end position="474"/>
    </location>
</feature>
<feature type="region of interest" description="Disordered" evidence="3">
    <location>
        <begin position="776"/>
        <end position="795"/>
    </location>
</feature>
<feature type="region of interest" description="Disordered" evidence="3">
    <location>
        <begin position="953"/>
        <end position="1033"/>
    </location>
</feature>
<feature type="coiled-coil region" evidence="2">
    <location>
        <begin position="99"/>
        <end position="124"/>
    </location>
</feature>
<feature type="coiled-coil region" evidence="2">
    <location>
        <begin position="479"/>
        <end position="509"/>
    </location>
</feature>
<feature type="coiled-coil region" evidence="2">
    <location>
        <begin position="638"/>
        <end position="659"/>
    </location>
</feature>
<feature type="compositionally biased region" description="Acidic residues" evidence="3">
    <location>
        <begin position="957"/>
        <end position="991"/>
    </location>
</feature>
<feature type="compositionally biased region" description="Acidic residues" evidence="3">
    <location>
        <begin position="998"/>
        <end position="1017"/>
    </location>
</feature>
<feature type="compositionally biased region" description="Basic and acidic residues" evidence="3">
    <location>
        <begin position="1018"/>
        <end position="1033"/>
    </location>
</feature>
<feature type="sequence conflict" description="In Ref. 1; AAA97888." evidence="4" ref="1">
    <original>THSL</original>
    <variation>DAFF</variation>
    <location>
        <begin position="157"/>
        <end position="160"/>
    </location>
</feature>
<name>SPT16_KLULA</name>
<keyword id="KW-0158">Chromosome</keyword>
<keyword id="KW-0175">Coiled coil</keyword>
<keyword id="KW-0227">DNA damage</keyword>
<keyword id="KW-0234">DNA repair</keyword>
<keyword id="KW-0235">DNA replication</keyword>
<keyword id="KW-0539">Nucleus</keyword>
<keyword id="KW-1185">Reference proteome</keyword>
<keyword id="KW-0804">Transcription</keyword>
<keyword id="KW-0805">Transcription regulation</keyword>
<reference key="1">
    <citation type="journal article" date="1998" name="Genetics">
        <title>The yeast protein complex containing cdc68 and pob3 mediates core-promoter repression through the cdc68 N-terminal domain.</title>
        <authorList>
            <person name="Evans D.R.H."/>
            <person name="Brewster N.K."/>
            <person name="Xu Q."/>
            <person name="Rowley A."/>
            <person name="Altheim B.A."/>
            <person name="Johnston G.C."/>
            <person name="Singer R.A."/>
        </authorList>
    </citation>
    <scope>NUCLEOTIDE SEQUENCE [GENOMIC DNA]</scope>
</reference>
<reference key="2">
    <citation type="journal article" date="2004" name="Nature">
        <title>Genome evolution in yeasts.</title>
        <authorList>
            <person name="Dujon B."/>
            <person name="Sherman D."/>
            <person name="Fischer G."/>
            <person name="Durrens P."/>
            <person name="Casaregola S."/>
            <person name="Lafontaine I."/>
            <person name="de Montigny J."/>
            <person name="Marck C."/>
            <person name="Neuveglise C."/>
            <person name="Talla E."/>
            <person name="Goffard N."/>
            <person name="Frangeul L."/>
            <person name="Aigle M."/>
            <person name="Anthouard V."/>
            <person name="Babour A."/>
            <person name="Barbe V."/>
            <person name="Barnay S."/>
            <person name="Blanchin S."/>
            <person name="Beckerich J.-M."/>
            <person name="Beyne E."/>
            <person name="Bleykasten C."/>
            <person name="Boisrame A."/>
            <person name="Boyer J."/>
            <person name="Cattolico L."/>
            <person name="Confanioleri F."/>
            <person name="de Daruvar A."/>
            <person name="Despons L."/>
            <person name="Fabre E."/>
            <person name="Fairhead C."/>
            <person name="Ferry-Dumazet H."/>
            <person name="Groppi A."/>
            <person name="Hantraye F."/>
            <person name="Hennequin C."/>
            <person name="Jauniaux N."/>
            <person name="Joyet P."/>
            <person name="Kachouri R."/>
            <person name="Kerrest A."/>
            <person name="Koszul R."/>
            <person name="Lemaire M."/>
            <person name="Lesur I."/>
            <person name="Ma L."/>
            <person name="Muller H."/>
            <person name="Nicaud J.-M."/>
            <person name="Nikolski M."/>
            <person name="Oztas S."/>
            <person name="Ozier-Kalogeropoulos O."/>
            <person name="Pellenz S."/>
            <person name="Potier S."/>
            <person name="Richard G.-F."/>
            <person name="Straub M.-L."/>
            <person name="Suleau A."/>
            <person name="Swennen D."/>
            <person name="Tekaia F."/>
            <person name="Wesolowski-Louvel M."/>
            <person name="Westhof E."/>
            <person name="Wirth B."/>
            <person name="Zeniou-Meyer M."/>
            <person name="Zivanovic Y."/>
            <person name="Bolotin-Fukuhara M."/>
            <person name="Thierry A."/>
            <person name="Bouchier C."/>
            <person name="Caudron B."/>
            <person name="Scarpelli C."/>
            <person name="Gaillardin C."/>
            <person name="Weissenbach J."/>
            <person name="Wincker P."/>
            <person name="Souciet J.-L."/>
        </authorList>
    </citation>
    <scope>NUCLEOTIDE SEQUENCE [LARGE SCALE GENOMIC DNA]</scope>
    <source>
        <strain>ATCC 8585 / CBS 2359 / DSM 70799 / NBRC 1267 / NRRL Y-1140 / WM37</strain>
    </source>
</reference>
<gene>
    <name type="primary">SPT16</name>
    <name type="synonym">CDC68</name>
    <name type="ordered locus">KLLA0F09889g</name>
</gene>
<accession>Q00976</accession>
<accession>Q6CKK9</accession>
<dbReference type="EMBL" id="U48701">
    <property type="protein sequence ID" value="AAA97888.1"/>
    <property type="molecule type" value="Genomic_DNA"/>
</dbReference>
<dbReference type="EMBL" id="CR382126">
    <property type="protein sequence ID" value="CAG98238.1"/>
    <property type="molecule type" value="Genomic_DNA"/>
</dbReference>
<dbReference type="RefSeq" id="XP_455530.1">
    <property type="nucleotide sequence ID" value="XM_455530.1"/>
</dbReference>
<dbReference type="SMR" id="Q00976"/>
<dbReference type="FunCoup" id="Q00976">
    <property type="interactions" value="1500"/>
</dbReference>
<dbReference type="STRING" id="284590.Q00976"/>
<dbReference type="PaxDb" id="284590-Q00976"/>
<dbReference type="KEGG" id="kla:KLLA0_F09889g"/>
<dbReference type="eggNOG" id="KOG1189">
    <property type="taxonomic scope" value="Eukaryota"/>
</dbReference>
<dbReference type="HOGENOM" id="CLU_004627_1_0_1"/>
<dbReference type="InParanoid" id="Q00976"/>
<dbReference type="OMA" id="YHINTIP"/>
<dbReference type="Proteomes" id="UP000000598">
    <property type="component" value="Chromosome F"/>
</dbReference>
<dbReference type="GO" id="GO:0035101">
    <property type="term" value="C:FACT complex"/>
    <property type="evidence" value="ECO:0007669"/>
    <property type="project" value="InterPro"/>
</dbReference>
<dbReference type="GO" id="GO:0031491">
    <property type="term" value="F:nucleosome binding"/>
    <property type="evidence" value="ECO:0007669"/>
    <property type="project" value="TreeGrafter"/>
</dbReference>
<dbReference type="GO" id="GO:0006281">
    <property type="term" value="P:DNA repair"/>
    <property type="evidence" value="ECO:0007669"/>
    <property type="project" value="UniProtKB-KW"/>
</dbReference>
<dbReference type="GO" id="GO:0006260">
    <property type="term" value="P:DNA replication"/>
    <property type="evidence" value="ECO:0007669"/>
    <property type="project" value="UniProtKB-KW"/>
</dbReference>
<dbReference type="GO" id="GO:0006368">
    <property type="term" value="P:transcription elongation by RNA polymerase II"/>
    <property type="evidence" value="ECO:0007669"/>
    <property type="project" value="TreeGrafter"/>
</dbReference>
<dbReference type="FunFam" id="2.30.29.150:FF:000002">
    <property type="entry name" value="FACT complex subunit SPT16"/>
    <property type="match status" value="1"/>
</dbReference>
<dbReference type="FunFam" id="2.30.29.30:FF:000017">
    <property type="entry name" value="FACT complex subunit SPT16"/>
    <property type="match status" value="1"/>
</dbReference>
<dbReference type="FunFam" id="3.40.350.10:FF:000006">
    <property type="entry name" value="FACT complex subunit SPT16"/>
    <property type="match status" value="1"/>
</dbReference>
<dbReference type="FunFam" id="2.30.29.210:FF:000001">
    <property type="entry name" value="FACT complex subunit spt16"/>
    <property type="match status" value="1"/>
</dbReference>
<dbReference type="FunFam" id="3.90.230.10:FF:000005">
    <property type="entry name" value="FACT complex subunit spt16"/>
    <property type="match status" value="1"/>
</dbReference>
<dbReference type="Gene3D" id="2.30.29.150">
    <property type="match status" value="1"/>
</dbReference>
<dbReference type="Gene3D" id="3.90.230.10">
    <property type="entry name" value="Creatinase/methionine aminopeptidase superfamily"/>
    <property type="match status" value="1"/>
</dbReference>
<dbReference type="Gene3D" id="3.40.350.10">
    <property type="entry name" value="Creatinase/prolidase N-terminal domain"/>
    <property type="match status" value="1"/>
</dbReference>
<dbReference type="Gene3D" id="2.30.29.210">
    <property type="entry name" value="FACT complex subunit Spt16p/Cdc68p"/>
    <property type="match status" value="1"/>
</dbReference>
<dbReference type="Gene3D" id="2.30.29.30">
    <property type="entry name" value="Pleckstrin-homology domain (PH domain)/Phosphotyrosine-binding domain (PTB)"/>
    <property type="match status" value="1"/>
</dbReference>
<dbReference type="InterPro" id="IPR029149">
    <property type="entry name" value="Creatin/AminoP/Spt16_N"/>
</dbReference>
<dbReference type="InterPro" id="IPR036005">
    <property type="entry name" value="Creatinase/aminopeptidase-like"/>
</dbReference>
<dbReference type="InterPro" id="IPR029148">
    <property type="entry name" value="FACT-SPT16_Nlobe"/>
</dbReference>
<dbReference type="InterPro" id="IPR056595">
    <property type="entry name" value="Fact-SPT16_PH"/>
</dbReference>
<dbReference type="InterPro" id="IPR048969">
    <property type="entry name" value="FACT_SPT16_C"/>
</dbReference>
<dbReference type="InterPro" id="IPR013953">
    <property type="entry name" value="FACT_SPT16_M"/>
</dbReference>
<dbReference type="InterPro" id="IPR000994">
    <property type="entry name" value="Pept_M24"/>
</dbReference>
<dbReference type="InterPro" id="IPR011993">
    <property type="entry name" value="PH-like_dom_sf"/>
</dbReference>
<dbReference type="InterPro" id="IPR013719">
    <property type="entry name" value="RTT106/SPT16-like_middle_dom"/>
</dbReference>
<dbReference type="InterPro" id="IPR040258">
    <property type="entry name" value="Spt16"/>
</dbReference>
<dbReference type="PANTHER" id="PTHR13980">
    <property type="entry name" value="CDC68 RELATED"/>
    <property type="match status" value="1"/>
</dbReference>
<dbReference type="PANTHER" id="PTHR13980:SF15">
    <property type="entry name" value="FACT COMPLEX SUBUNIT SPT16"/>
    <property type="match status" value="1"/>
</dbReference>
<dbReference type="Pfam" id="PF14826">
    <property type="entry name" value="FACT-Spt16_Nlob"/>
    <property type="match status" value="1"/>
</dbReference>
<dbReference type="Pfam" id="PF00557">
    <property type="entry name" value="Peptidase_M24"/>
    <property type="match status" value="1"/>
</dbReference>
<dbReference type="Pfam" id="PF24824">
    <property type="entry name" value="PH_SPT16"/>
    <property type="match status" value="1"/>
</dbReference>
<dbReference type="Pfam" id="PF08512">
    <property type="entry name" value="Rttp106-like_middle"/>
    <property type="match status" value="1"/>
</dbReference>
<dbReference type="Pfam" id="PF08644">
    <property type="entry name" value="SPT16"/>
    <property type="match status" value="1"/>
</dbReference>
<dbReference type="Pfam" id="PF21091">
    <property type="entry name" value="SPT16_C"/>
    <property type="match status" value="1"/>
</dbReference>
<dbReference type="SMART" id="SM01285">
    <property type="entry name" value="FACT-Spt16_Nlob"/>
    <property type="match status" value="1"/>
</dbReference>
<dbReference type="SMART" id="SM01287">
    <property type="entry name" value="Rtt106"/>
    <property type="match status" value="1"/>
</dbReference>
<dbReference type="SMART" id="SM01286">
    <property type="entry name" value="SPT16"/>
    <property type="match status" value="1"/>
</dbReference>
<dbReference type="SUPFAM" id="SSF55920">
    <property type="entry name" value="Creatinase/aminopeptidase"/>
    <property type="match status" value="1"/>
</dbReference>
<protein>
    <recommendedName>
        <fullName>FACT complex subunit SPT16</fullName>
    </recommendedName>
    <alternativeName>
        <fullName>Cell division control protein 68</fullName>
    </alternativeName>
    <alternativeName>
        <fullName>Facilitates chromatin transcription complex subunit SPT16</fullName>
    </alternativeName>
</protein>
<organism>
    <name type="scientific">Kluyveromyces lactis (strain ATCC 8585 / CBS 2359 / DSM 70799 / NBRC 1267 / NRRL Y-1140 / WM37)</name>
    <name type="common">Yeast</name>
    <name type="synonym">Candida sphaerica</name>
    <dbReference type="NCBI Taxonomy" id="284590"/>
    <lineage>
        <taxon>Eukaryota</taxon>
        <taxon>Fungi</taxon>
        <taxon>Dikarya</taxon>
        <taxon>Ascomycota</taxon>
        <taxon>Saccharomycotina</taxon>
        <taxon>Saccharomycetes</taxon>
        <taxon>Saccharomycetales</taxon>
        <taxon>Saccharomycetaceae</taxon>
        <taxon>Kluyveromyces</taxon>
    </lineage>
</organism>
<proteinExistence type="inferred from homology"/>